<name>RL4_STAAN</name>
<proteinExistence type="evidence at protein level"/>
<sequence length="207" mass="22465">MANYDVLKLDGTKSGSIELSDAVFGIEPNNSVLFEAINLQRASLRQGTHAVKNRSAVSGGGRKPWKQKGTGRARQGTIRAPQWRGGGIVFGPTPRSYAYKMPKKMRRLALRSALSFKAQENGLTVVDAFNFEAPKTKEFKNVLSTLEQPKKVLVVTENEDVNVELSARNIPGVQVTTAQGLNVLDITNADSLVITEAAAKKVEEVLG</sequence>
<accession>P61059</accession>
<accession>Q99S22</accession>
<gene>
    <name evidence="1" type="primary">rplD</name>
    <name type="ordered locus">SA2046</name>
</gene>
<organism>
    <name type="scientific">Staphylococcus aureus (strain N315)</name>
    <dbReference type="NCBI Taxonomy" id="158879"/>
    <lineage>
        <taxon>Bacteria</taxon>
        <taxon>Bacillati</taxon>
        <taxon>Bacillota</taxon>
        <taxon>Bacilli</taxon>
        <taxon>Bacillales</taxon>
        <taxon>Staphylococcaceae</taxon>
        <taxon>Staphylococcus</taxon>
    </lineage>
</organism>
<comment type="function">
    <text evidence="1">One of the primary rRNA binding proteins, this protein initially binds near the 5'-end of the 23S rRNA. It is important during the early stages of 50S assembly. It makes multiple contacts with different domains of the 23S rRNA in the assembled 50S subunit and ribosome.</text>
</comment>
<comment type="function">
    <text evidence="1">Forms part of the polypeptide exit tunnel.</text>
</comment>
<comment type="subunit">
    <text evidence="1">Part of the 50S ribosomal subunit.</text>
</comment>
<comment type="similarity">
    <text evidence="1">Belongs to the universal ribosomal protein uL4 family.</text>
</comment>
<evidence type="ECO:0000255" key="1">
    <source>
        <dbReference type="HAMAP-Rule" id="MF_01328"/>
    </source>
</evidence>
<evidence type="ECO:0000256" key="2">
    <source>
        <dbReference type="SAM" id="MobiDB-lite"/>
    </source>
</evidence>
<evidence type="ECO:0000305" key="3"/>
<keyword id="KW-0687">Ribonucleoprotein</keyword>
<keyword id="KW-0689">Ribosomal protein</keyword>
<keyword id="KW-0694">RNA-binding</keyword>
<keyword id="KW-0699">rRNA-binding</keyword>
<reference key="1">
    <citation type="journal article" date="2001" name="Lancet">
        <title>Whole genome sequencing of meticillin-resistant Staphylococcus aureus.</title>
        <authorList>
            <person name="Kuroda M."/>
            <person name="Ohta T."/>
            <person name="Uchiyama I."/>
            <person name="Baba T."/>
            <person name="Yuzawa H."/>
            <person name="Kobayashi I."/>
            <person name="Cui L."/>
            <person name="Oguchi A."/>
            <person name="Aoki K."/>
            <person name="Nagai Y."/>
            <person name="Lian J.-Q."/>
            <person name="Ito T."/>
            <person name="Kanamori M."/>
            <person name="Matsumaru H."/>
            <person name="Maruyama A."/>
            <person name="Murakami H."/>
            <person name="Hosoyama A."/>
            <person name="Mizutani-Ui Y."/>
            <person name="Takahashi N.K."/>
            <person name="Sawano T."/>
            <person name="Inoue R."/>
            <person name="Kaito C."/>
            <person name="Sekimizu K."/>
            <person name="Hirakawa H."/>
            <person name="Kuhara S."/>
            <person name="Goto S."/>
            <person name="Yabuzaki J."/>
            <person name="Kanehisa M."/>
            <person name="Yamashita A."/>
            <person name="Oshima K."/>
            <person name="Furuya K."/>
            <person name="Yoshino C."/>
            <person name="Shiba T."/>
            <person name="Hattori M."/>
            <person name="Ogasawara N."/>
            <person name="Hayashi H."/>
            <person name="Hiramatsu K."/>
        </authorList>
    </citation>
    <scope>NUCLEOTIDE SEQUENCE [LARGE SCALE GENOMIC DNA]</scope>
    <source>
        <strain>N315</strain>
    </source>
</reference>
<reference key="2">
    <citation type="submission" date="2007-10" db="UniProtKB">
        <title>Shotgun proteomic analysis of total and membrane protein extracts of S. aureus strain N315.</title>
        <authorList>
            <person name="Vaezzadeh A.R."/>
            <person name="Deshusses J."/>
            <person name="Lescuyer P."/>
            <person name="Hochstrasser D.F."/>
        </authorList>
    </citation>
    <scope>IDENTIFICATION BY MASS SPECTROMETRY [LARGE SCALE ANALYSIS]</scope>
    <source>
        <strain>N315</strain>
    </source>
</reference>
<feature type="chain" id="PRO_0000129276" description="Large ribosomal subunit protein uL4">
    <location>
        <begin position="1"/>
        <end position="207"/>
    </location>
</feature>
<feature type="region of interest" description="Disordered" evidence="2">
    <location>
        <begin position="50"/>
        <end position="76"/>
    </location>
</feature>
<protein>
    <recommendedName>
        <fullName evidence="1">Large ribosomal subunit protein uL4</fullName>
    </recommendedName>
    <alternativeName>
        <fullName evidence="3">50S ribosomal protein L4</fullName>
    </alternativeName>
</protein>
<dbReference type="EMBL" id="BA000018">
    <property type="protein sequence ID" value="BAB43341.1"/>
    <property type="molecule type" value="Genomic_DNA"/>
</dbReference>
<dbReference type="PIR" id="D90022">
    <property type="entry name" value="D90022"/>
</dbReference>
<dbReference type="RefSeq" id="WP_000024827.1">
    <property type="nucleotide sequence ID" value="NC_002745.2"/>
</dbReference>
<dbReference type="SMR" id="P61059"/>
<dbReference type="EnsemblBacteria" id="BAB43341">
    <property type="protein sequence ID" value="BAB43341"/>
    <property type="gene ID" value="BAB43341"/>
</dbReference>
<dbReference type="KEGG" id="sau:SA2046"/>
<dbReference type="HOGENOM" id="CLU_041575_5_2_9"/>
<dbReference type="GO" id="GO:1990904">
    <property type="term" value="C:ribonucleoprotein complex"/>
    <property type="evidence" value="ECO:0007669"/>
    <property type="project" value="UniProtKB-KW"/>
</dbReference>
<dbReference type="GO" id="GO:0005840">
    <property type="term" value="C:ribosome"/>
    <property type="evidence" value="ECO:0007669"/>
    <property type="project" value="UniProtKB-KW"/>
</dbReference>
<dbReference type="GO" id="GO:0019843">
    <property type="term" value="F:rRNA binding"/>
    <property type="evidence" value="ECO:0007669"/>
    <property type="project" value="UniProtKB-UniRule"/>
</dbReference>
<dbReference type="GO" id="GO:0003735">
    <property type="term" value="F:structural constituent of ribosome"/>
    <property type="evidence" value="ECO:0007669"/>
    <property type="project" value="InterPro"/>
</dbReference>
<dbReference type="GO" id="GO:0006412">
    <property type="term" value="P:translation"/>
    <property type="evidence" value="ECO:0007669"/>
    <property type="project" value="UniProtKB-UniRule"/>
</dbReference>
<dbReference type="FunFam" id="3.40.1370.10:FF:000003">
    <property type="entry name" value="50S ribosomal protein L4"/>
    <property type="match status" value="1"/>
</dbReference>
<dbReference type="Gene3D" id="3.40.1370.10">
    <property type="match status" value="1"/>
</dbReference>
<dbReference type="HAMAP" id="MF_01328_B">
    <property type="entry name" value="Ribosomal_uL4_B"/>
    <property type="match status" value="1"/>
</dbReference>
<dbReference type="InterPro" id="IPR002136">
    <property type="entry name" value="Ribosomal_uL4"/>
</dbReference>
<dbReference type="InterPro" id="IPR013005">
    <property type="entry name" value="Ribosomal_uL4-like"/>
</dbReference>
<dbReference type="InterPro" id="IPR023574">
    <property type="entry name" value="Ribosomal_uL4_dom_sf"/>
</dbReference>
<dbReference type="NCBIfam" id="TIGR03953">
    <property type="entry name" value="rplD_bact"/>
    <property type="match status" value="1"/>
</dbReference>
<dbReference type="PANTHER" id="PTHR10746">
    <property type="entry name" value="50S RIBOSOMAL PROTEIN L4"/>
    <property type="match status" value="1"/>
</dbReference>
<dbReference type="PANTHER" id="PTHR10746:SF6">
    <property type="entry name" value="LARGE RIBOSOMAL SUBUNIT PROTEIN UL4M"/>
    <property type="match status" value="1"/>
</dbReference>
<dbReference type="Pfam" id="PF00573">
    <property type="entry name" value="Ribosomal_L4"/>
    <property type="match status" value="1"/>
</dbReference>
<dbReference type="SUPFAM" id="SSF52166">
    <property type="entry name" value="Ribosomal protein L4"/>
    <property type="match status" value="1"/>
</dbReference>